<comment type="function">
    <text evidence="1">Binds to 23S rRNA. Forms part of two intersubunit bridges in the 70S ribosome.</text>
</comment>
<comment type="subunit">
    <text evidence="1">Part of the 50S ribosomal subunit. Forms a cluster with proteins L3 and L19. In the 70S ribosome, L14 and L19 interact and together make contacts with the 16S rRNA in bridges B5 and B8.</text>
</comment>
<comment type="similarity">
    <text evidence="1">Belongs to the universal ribosomal protein uL14 family.</text>
</comment>
<proteinExistence type="inferred from homology"/>
<accession>B2UMS9</accession>
<reference key="1">
    <citation type="journal article" date="2011" name="PLoS ONE">
        <title>The genome of Akkermansia muciniphila, a dedicated intestinal mucin degrader, and its use in exploring intestinal metagenomes.</title>
        <authorList>
            <person name="van Passel M.W."/>
            <person name="Kant R."/>
            <person name="Zoetendal E.G."/>
            <person name="Plugge C.M."/>
            <person name="Derrien M."/>
            <person name="Malfatti S.A."/>
            <person name="Chain P.S."/>
            <person name="Woyke T."/>
            <person name="Palva A."/>
            <person name="de Vos W.M."/>
            <person name="Smidt H."/>
        </authorList>
    </citation>
    <scope>NUCLEOTIDE SEQUENCE [LARGE SCALE GENOMIC DNA]</scope>
    <source>
        <strain>ATCC BAA-835 / DSM 22959 / JCM 33894 / BCRC 81048 / CCUG 64013 / CIP 107961 / Muc</strain>
    </source>
</reference>
<organism>
    <name type="scientific">Akkermansia muciniphila (strain ATCC BAA-835 / DSM 22959 / JCM 33894 / BCRC 81048 / CCUG 64013 / CIP 107961 / Muc)</name>
    <dbReference type="NCBI Taxonomy" id="349741"/>
    <lineage>
        <taxon>Bacteria</taxon>
        <taxon>Pseudomonadati</taxon>
        <taxon>Verrucomicrobiota</taxon>
        <taxon>Verrucomicrobiia</taxon>
        <taxon>Verrucomicrobiales</taxon>
        <taxon>Akkermansiaceae</taxon>
        <taxon>Akkermansia</taxon>
    </lineage>
</organism>
<keyword id="KW-1185">Reference proteome</keyword>
<keyword id="KW-0687">Ribonucleoprotein</keyword>
<keyword id="KW-0689">Ribosomal protein</keyword>
<keyword id="KW-0694">RNA-binding</keyword>
<keyword id="KW-0699">rRNA-binding</keyword>
<feature type="chain" id="PRO_0000355802" description="Large ribosomal subunit protein uL14">
    <location>
        <begin position="1"/>
        <end position="121"/>
    </location>
</feature>
<gene>
    <name evidence="1" type="primary">rplN</name>
    <name type="ordered locus">Amuc_0293</name>
</gene>
<name>RL14_AKKM8</name>
<protein>
    <recommendedName>
        <fullName evidence="1">Large ribosomal subunit protein uL14</fullName>
    </recommendedName>
    <alternativeName>
        <fullName evidence="2">50S ribosomal protein L14</fullName>
    </alternativeName>
</protein>
<evidence type="ECO:0000255" key="1">
    <source>
        <dbReference type="HAMAP-Rule" id="MF_01367"/>
    </source>
</evidence>
<evidence type="ECO:0000305" key="2"/>
<dbReference type="EMBL" id="CP001071">
    <property type="protein sequence ID" value="ACD04135.1"/>
    <property type="molecule type" value="Genomic_DNA"/>
</dbReference>
<dbReference type="RefSeq" id="WP_012419350.1">
    <property type="nucleotide sequence ID" value="NZ_CP071807.1"/>
</dbReference>
<dbReference type="SMR" id="B2UMS9"/>
<dbReference type="STRING" id="349741.Amuc_0293"/>
<dbReference type="PaxDb" id="349741-Amuc_0293"/>
<dbReference type="GeneID" id="86959771"/>
<dbReference type="KEGG" id="amu:Amuc_0293"/>
<dbReference type="eggNOG" id="COG0093">
    <property type="taxonomic scope" value="Bacteria"/>
</dbReference>
<dbReference type="HOGENOM" id="CLU_095071_2_1_0"/>
<dbReference type="OrthoDB" id="9806379at2"/>
<dbReference type="BioCyc" id="AMUC349741:G1GBX-335-MONOMER"/>
<dbReference type="Proteomes" id="UP000001031">
    <property type="component" value="Chromosome"/>
</dbReference>
<dbReference type="GO" id="GO:0022625">
    <property type="term" value="C:cytosolic large ribosomal subunit"/>
    <property type="evidence" value="ECO:0007669"/>
    <property type="project" value="TreeGrafter"/>
</dbReference>
<dbReference type="GO" id="GO:0070180">
    <property type="term" value="F:large ribosomal subunit rRNA binding"/>
    <property type="evidence" value="ECO:0007669"/>
    <property type="project" value="TreeGrafter"/>
</dbReference>
<dbReference type="GO" id="GO:0003735">
    <property type="term" value="F:structural constituent of ribosome"/>
    <property type="evidence" value="ECO:0007669"/>
    <property type="project" value="InterPro"/>
</dbReference>
<dbReference type="GO" id="GO:0006412">
    <property type="term" value="P:translation"/>
    <property type="evidence" value="ECO:0007669"/>
    <property type="project" value="UniProtKB-UniRule"/>
</dbReference>
<dbReference type="CDD" id="cd00337">
    <property type="entry name" value="Ribosomal_uL14"/>
    <property type="match status" value="1"/>
</dbReference>
<dbReference type="Gene3D" id="2.40.150.20">
    <property type="entry name" value="Ribosomal protein L14"/>
    <property type="match status" value="1"/>
</dbReference>
<dbReference type="HAMAP" id="MF_01367">
    <property type="entry name" value="Ribosomal_uL14"/>
    <property type="match status" value="1"/>
</dbReference>
<dbReference type="InterPro" id="IPR000218">
    <property type="entry name" value="Ribosomal_uL14"/>
</dbReference>
<dbReference type="InterPro" id="IPR005745">
    <property type="entry name" value="Ribosomal_uL14_bac-type"/>
</dbReference>
<dbReference type="InterPro" id="IPR019972">
    <property type="entry name" value="Ribosomal_uL14_CS"/>
</dbReference>
<dbReference type="InterPro" id="IPR036853">
    <property type="entry name" value="Ribosomal_uL14_sf"/>
</dbReference>
<dbReference type="NCBIfam" id="TIGR01067">
    <property type="entry name" value="rplN_bact"/>
    <property type="match status" value="1"/>
</dbReference>
<dbReference type="PANTHER" id="PTHR11761">
    <property type="entry name" value="50S/60S RIBOSOMAL PROTEIN L14/L23"/>
    <property type="match status" value="1"/>
</dbReference>
<dbReference type="PANTHER" id="PTHR11761:SF3">
    <property type="entry name" value="LARGE RIBOSOMAL SUBUNIT PROTEIN UL14M"/>
    <property type="match status" value="1"/>
</dbReference>
<dbReference type="Pfam" id="PF00238">
    <property type="entry name" value="Ribosomal_L14"/>
    <property type="match status" value="1"/>
</dbReference>
<dbReference type="SMART" id="SM01374">
    <property type="entry name" value="Ribosomal_L14"/>
    <property type="match status" value="1"/>
</dbReference>
<dbReference type="SUPFAM" id="SSF50193">
    <property type="entry name" value="Ribosomal protein L14"/>
    <property type="match status" value="1"/>
</dbReference>
<dbReference type="PROSITE" id="PS00049">
    <property type="entry name" value="RIBOSOMAL_L14"/>
    <property type="match status" value="1"/>
</dbReference>
<sequence>MIQMESLVQVADNTGARSAKMIGVIGKRTRQAHIGDIITCHIRESIPTASVKKGTVVKAVVVRTAAPIRRDDGSVLRFDGNAVVIIDKDNNPRGTRIFGPVARELREKKFMKIVSLAPEVL</sequence>